<accession>F5HAZ3</accession>
<proteinExistence type="inferred from homology"/>
<keyword id="KW-1185">Reference proteome</keyword>
<keyword id="KW-0946">Virion</keyword>
<keyword id="KW-0920">Virion tegument</keyword>
<organismHost>
    <name type="scientific">Homo sapiens</name>
    <name type="common">Human</name>
    <dbReference type="NCBI Taxonomy" id="9606"/>
</organismHost>
<dbReference type="EMBL" id="AY446894">
    <property type="protein sequence ID" value="AAR31712.1"/>
    <property type="molecule type" value="Genomic_DNA"/>
</dbReference>
<dbReference type="RefSeq" id="YP_081608.1">
    <property type="nucleotide sequence ID" value="NC_006273.2"/>
</dbReference>
<dbReference type="GeneID" id="3077446"/>
<dbReference type="KEGG" id="vg:3077446"/>
<dbReference type="Reactome" id="R-HSA-9609690">
    <property type="pathway name" value="HCMV Early Events"/>
</dbReference>
<dbReference type="Reactome" id="R-HSA-9610379">
    <property type="pathway name" value="HCMV Late Events"/>
</dbReference>
<dbReference type="Proteomes" id="UP000000938">
    <property type="component" value="Segment"/>
</dbReference>
<dbReference type="GO" id="GO:0019033">
    <property type="term" value="C:viral tegument"/>
    <property type="evidence" value="ECO:0000304"/>
    <property type="project" value="Reactome"/>
</dbReference>
<dbReference type="InterPro" id="IPR003360">
    <property type="entry name" value="US22-like"/>
</dbReference>
<dbReference type="Pfam" id="PF02393">
    <property type="entry name" value="US22"/>
    <property type="match status" value="2"/>
</dbReference>
<feature type="chain" id="PRO_0000416728" description="Protein US23">
    <location>
        <begin position="1"/>
        <end position="592"/>
    </location>
</feature>
<feature type="region of interest" description="Disordered" evidence="1">
    <location>
        <begin position="407"/>
        <end position="491"/>
    </location>
</feature>
<feature type="compositionally biased region" description="Acidic residues" evidence="1">
    <location>
        <begin position="460"/>
        <end position="481"/>
    </location>
</feature>
<comment type="subcellular location">
    <subcellularLocation>
        <location evidence="2">Virion tegument</location>
    </subcellularLocation>
</comment>
<comment type="similarity">
    <text evidence="2">Belongs to the herpesviridae US22 family.</text>
</comment>
<name>US23_HCMVM</name>
<evidence type="ECO:0000256" key="1">
    <source>
        <dbReference type="SAM" id="MobiDB-lite"/>
    </source>
</evidence>
<evidence type="ECO:0000305" key="2"/>
<reference key="1">
    <citation type="journal article" date="2004" name="J. Gen. Virol.">
        <title>Genetic content of wild-type human cytomegalovirus.</title>
        <authorList>
            <person name="Dolan A."/>
            <person name="Cunningham C."/>
            <person name="Hector R.D."/>
            <person name="Hassan-Walker A.F."/>
            <person name="Lee L."/>
            <person name="Addison C."/>
            <person name="Dargan D.J."/>
            <person name="McGeoch D.J."/>
            <person name="Gatherer D."/>
            <person name="Emery V.C."/>
            <person name="Griffiths P.D."/>
            <person name="Sinzger C."/>
            <person name="McSharry B.P."/>
            <person name="Wilkinson G.W.G."/>
            <person name="Davison A.J."/>
        </authorList>
    </citation>
    <scope>NUCLEOTIDE SEQUENCE [LARGE SCALE GENOMIC DNA]</scope>
</reference>
<organism>
    <name type="scientific">Human cytomegalovirus (strain Merlin)</name>
    <name type="common">HHV-5</name>
    <name type="synonym">Human herpesvirus 5</name>
    <dbReference type="NCBI Taxonomy" id="295027"/>
    <lineage>
        <taxon>Viruses</taxon>
        <taxon>Duplodnaviria</taxon>
        <taxon>Heunggongvirae</taxon>
        <taxon>Peploviricota</taxon>
        <taxon>Herviviricetes</taxon>
        <taxon>Herpesvirales</taxon>
        <taxon>Orthoherpesviridae</taxon>
        <taxon>Betaherpesvirinae</taxon>
        <taxon>Cytomegalovirus</taxon>
        <taxon>Cytomegalovirus humanbeta5</taxon>
        <taxon>Human cytomegalovirus</taxon>
    </lineage>
</organism>
<gene>
    <name type="primary">US23</name>
</gene>
<protein>
    <recommendedName>
        <fullName>Protein US23</fullName>
    </recommendedName>
</protein>
<sequence length="592" mass="68886">MWRTRWEDGAPTFTRNDEFLYCHTRYETFLRVMGDFQGIFECQYSADVLRDWVRNHVDQVLSLGIPHNWFLQVRPGSTMPELRDQLLDDVICCPERLIVLGKCVIMVDDHYEETELVLCMGGGTRLYIYEPSQEILLLCARHLDELARYGMMYTEAVYRQPQTPFATRVPHDVVAMLLRHGHDTDALAACVGEHHGRDVNFHTPGRHAKTLKLLTSFGCLTDCWPFEVAPAARLAECEMYVTLQLRCRWYLLGAVGSYRAGGFFDTSFLIIFDRFCRFYVVIVKSHLDRSPPLQRLAGEIYRLADSLEELFRAGLMKVYVRRRYEHGLRRAARLERNGGCVHMGEAARLHFTMFDSGVDRDYARQFRWLCRGDRFRAEMLNNWDGWDAFTIWQARVVRGDFAERRRPRSLGDGEEEDEGNDGRAMPVVRRRPPPMPRDDDEDNHVVPDNQNLEVIHDALADDEEQGEDDDDSGAEPMEPEENNVVPNVDRRGGEDAVAARMAAGHESDDDEWEDLGFDLEEDTVFDLKDVDEWFEQRRLAEKERWHLGQRIVNAYRTEAEVSEAEVEARRINLNTDLSPEWVKSFDFREHFV</sequence>